<gene>
    <name evidence="1" type="primary">aspS</name>
    <name type="ordered locus">MYPE2870</name>
</gene>
<feature type="chain" id="PRO_0000110906" description="Aspartate--tRNA ligase">
    <location>
        <begin position="1"/>
        <end position="580"/>
    </location>
</feature>
<feature type="region of interest" description="Aspartate" evidence="1">
    <location>
        <begin position="195"/>
        <end position="198"/>
    </location>
</feature>
<feature type="binding site" evidence="1">
    <location>
        <position position="173"/>
    </location>
    <ligand>
        <name>L-aspartate</name>
        <dbReference type="ChEBI" id="CHEBI:29991"/>
    </ligand>
</feature>
<feature type="binding site" evidence="1">
    <location>
        <begin position="217"/>
        <end position="219"/>
    </location>
    <ligand>
        <name>ATP</name>
        <dbReference type="ChEBI" id="CHEBI:30616"/>
    </ligand>
</feature>
<feature type="binding site" evidence="1">
    <location>
        <position position="217"/>
    </location>
    <ligand>
        <name>L-aspartate</name>
        <dbReference type="ChEBI" id="CHEBI:29991"/>
    </ligand>
</feature>
<feature type="binding site" evidence="1">
    <location>
        <position position="226"/>
    </location>
    <ligand>
        <name>ATP</name>
        <dbReference type="ChEBI" id="CHEBI:30616"/>
    </ligand>
</feature>
<feature type="binding site" evidence="1">
    <location>
        <position position="443"/>
    </location>
    <ligand>
        <name>L-aspartate</name>
        <dbReference type="ChEBI" id="CHEBI:29991"/>
    </ligand>
</feature>
<feature type="binding site" evidence="1">
    <location>
        <position position="477"/>
    </location>
    <ligand>
        <name>ATP</name>
        <dbReference type="ChEBI" id="CHEBI:30616"/>
    </ligand>
</feature>
<feature type="binding site" evidence="1">
    <location>
        <position position="484"/>
    </location>
    <ligand>
        <name>L-aspartate</name>
        <dbReference type="ChEBI" id="CHEBI:29991"/>
    </ligand>
</feature>
<feature type="binding site" evidence="1">
    <location>
        <begin position="529"/>
        <end position="532"/>
    </location>
    <ligand>
        <name>ATP</name>
        <dbReference type="ChEBI" id="CHEBI:30616"/>
    </ligand>
</feature>
<proteinExistence type="inferred from homology"/>
<evidence type="ECO:0000255" key="1">
    <source>
        <dbReference type="HAMAP-Rule" id="MF_00044"/>
    </source>
</evidence>
<accession>Q8EWB7</accession>
<comment type="function">
    <text evidence="1">Catalyzes the attachment of L-aspartate to tRNA(Asp) in a two-step reaction: L-aspartate is first activated by ATP to form Asp-AMP and then transferred to the acceptor end of tRNA(Asp).</text>
</comment>
<comment type="catalytic activity">
    <reaction evidence="1">
        <text>tRNA(Asp) + L-aspartate + ATP = L-aspartyl-tRNA(Asp) + AMP + diphosphate</text>
        <dbReference type="Rhea" id="RHEA:19649"/>
        <dbReference type="Rhea" id="RHEA-COMP:9660"/>
        <dbReference type="Rhea" id="RHEA-COMP:9678"/>
        <dbReference type="ChEBI" id="CHEBI:29991"/>
        <dbReference type="ChEBI" id="CHEBI:30616"/>
        <dbReference type="ChEBI" id="CHEBI:33019"/>
        <dbReference type="ChEBI" id="CHEBI:78442"/>
        <dbReference type="ChEBI" id="CHEBI:78516"/>
        <dbReference type="ChEBI" id="CHEBI:456215"/>
        <dbReference type="EC" id="6.1.1.12"/>
    </reaction>
</comment>
<comment type="subunit">
    <text evidence="1">Homodimer.</text>
</comment>
<comment type="subcellular location">
    <subcellularLocation>
        <location evidence="1">Cytoplasm</location>
    </subcellularLocation>
</comment>
<comment type="similarity">
    <text evidence="1">Belongs to the class-II aminoacyl-tRNA synthetase family. Type 1 subfamily.</text>
</comment>
<dbReference type="EC" id="6.1.1.12" evidence="1"/>
<dbReference type="EMBL" id="BA000026">
    <property type="protein sequence ID" value="BAC44079.1"/>
    <property type="molecule type" value="Genomic_DNA"/>
</dbReference>
<dbReference type="RefSeq" id="WP_011077115.1">
    <property type="nucleotide sequence ID" value="NC_004432.1"/>
</dbReference>
<dbReference type="SMR" id="Q8EWB7"/>
<dbReference type="FunCoup" id="Q8EWB7">
    <property type="interactions" value="253"/>
</dbReference>
<dbReference type="STRING" id="272633.gene:10731390"/>
<dbReference type="KEGG" id="mpe:MYPE2870"/>
<dbReference type="eggNOG" id="COG0173">
    <property type="taxonomic scope" value="Bacteria"/>
</dbReference>
<dbReference type="HOGENOM" id="CLU_014330_3_2_14"/>
<dbReference type="InParanoid" id="Q8EWB7"/>
<dbReference type="Proteomes" id="UP000002522">
    <property type="component" value="Chromosome"/>
</dbReference>
<dbReference type="GO" id="GO:0005737">
    <property type="term" value="C:cytoplasm"/>
    <property type="evidence" value="ECO:0007669"/>
    <property type="project" value="UniProtKB-SubCell"/>
</dbReference>
<dbReference type="GO" id="GO:0004815">
    <property type="term" value="F:aspartate-tRNA ligase activity"/>
    <property type="evidence" value="ECO:0007669"/>
    <property type="project" value="UniProtKB-UniRule"/>
</dbReference>
<dbReference type="GO" id="GO:0005524">
    <property type="term" value="F:ATP binding"/>
    <property type="evidence" value="ECO:0007669"/>
    <property type="project" value="UniProtKB-UniRule"/>
</dbReference>
<dbReference type="GO" id="GO:0003676">
    <property type="term" value="F:nucleic acid binding"/>
    <property type="evidence" value="ECO:0007669"/>
    <property type="project" value="InterPro"/>
</dbReference>
<dbReference type="GO" id="GO:0006422">
    <property type="term" value="P:aspartyl-tRNA aminoacylation"/>
    <property type="evidence" value="ECO:0007669"/>
    <property type="project" value="UniProtKB-UniRule"/>
</dbReference>
<dbReference type="CDD" id="cd00777">
    <property type="entry name" value="AspRS_core"/>
    <property type="match status" value="1"/>
</dbReference>
<dbReference type="CDD" id="cd04317">
    <property type="entry name" value="EcAspRS_like_N"/>
    <property type="match status" value="1"/>
</dbReference>
<dbReference type="Gene3D" id="3.30.930.10">
    <property type="entry name" value="Bira Bifunctional Protein, Domain 2"/>
    <property type="match status" value="1"/>
</dbReference>
<dbReference type="Gene3D" id="3.30.1360.30">
    <property type="entry name" value="GAD-like domain"/>
    <property type="match status" value="1"/>
</dbReference>
<dbReference type="Gene3D" id="2.40.50.140">
    <property type="entry name" value="Nucleic acid-binding proteins"/>
    <property type="match status" value="1"/>
</dbReference>
<dbReference type="HAMAP" id="MF_00044">
    <property type="entry name" value="Asp_tRNA_synth_type1"/>
    <property type="match status" value="1"/>
</dbReference>
<dbReference type="InterPro" id="IPR004364">
    <property type="entry name" value="Aa-tRNA-synt_II"/>
</dbReference>
<dbReference type="InterPro" id="IPR006195">
    <property type="entry name" value="aa-tRNA-synth_II"/>
</dbReference>
<dbReference type="InterPro" id="IPR045864">
    <property type="entry name" value="aa-tRNA-synth_II/BPL/LPL"/>
</dbReference>
<dbReference type="InterPro" id="IPR004524">
    <property type="entry name" value="Asp-tRNA-ligase_1"/>
</dbReference>
<dbReference type="InterPro" id="IPR047089">
    <property type="entry name" value="Asp-tRNA-ligase_1_N"/>
</dbReference>
<dbReference type="InterPro" id="IPR002312">
    <property type="entry name" value="Asp/Asn-tRNA-synth_IIb"/>
</dbReference>
<dbReference type="InterPro" id="IPR047090">
    <property type="entry name" value="AspRS_core"/>
</dbReference>
<dbReference type="InterPro" id="IPR004115">
    <property type="entry name" value="GAD-like_sf"/>
</dbReference>
<dbReference type="InterPro" id="IPR029351">
    <property type="entry name" value="GAD_dom"/>
</dbReference>
<dbReference type="InterPro" id="IPR012340">
    <property type="entry name" value="NA-bd_OB-fold"/>
</dbReference>
<dbReference type="InterPro" id="IPR004365">
    <property type="entry name" value="NA-bd_OB_tRNA"/>
</dbReference>
<dbReference type="NCBIfam" id="TIGR00459">
    <property type="entry name" value="aspS_bact"/>
    <property type="match status" value="1"/>
</dbReference>
<dbReference type="NCBIfam" id="NF001750">
    <property type="entry name" value="PRK00476.1"/>
    <property type="match status" value="1"/>
</dbReference>
<dbReference type="PANTHER" id="PTHR22594:SF5">
    <property type="entry name" value="ASPARTATE--TRNA LIGASE, MITOCHONDRIAL"/>
    <property type="match status" value="1"/>
</dbReference>
<dbReference type="PANTHER" id="PTHR22594">
    <property type="entry name" value="ASPARTYL/LYSYL-TRNA SYNTHETASE"/>
    <property type="match status" value="1"/>
</dbReference>
<dbReference type="Pfam" id="PF02938">
    <property type="entry name" value="GAD"/>
    <property type="match status" value="1"/>
</dbReference>
<dbReference type="Pfam" id="PF00152">
    <property type="entry name" value="tRNA-synt_2"/>
    <property type="match status" value="1"/>
</dbReference>
<dbReference type="Pfam" id="PF01336">
    <property type="entry name" value="tRNA_anti-codon"/>
    <property type="match status" value="1"/>
</dbReference>
<dbReference type="PRINTS" id="PR01042">
    <property type="entry name" value="TRNASYNTHASP"/>
</dbReference>
<dbReference type="SUPFAM" id="SSF55681">
    <property type="entry name" value="Class II aaRS and biotin synthetases"/>
    <property type="match status" value="1"/>
</dbReference>
<dbReference type="SUPFAM" id="SSF55261">
    <property type="entry name" value="GAD domain-like"/>
    <property type="match status" value="1"/>
</dbReference>
<dbReference type="SUPFAM" id="SSF50249">
    <property type="entry name" value="Nucleic acid-binding proteins"/>
    <property type="match status" value="1"/>
</dbReference>
<dbReference type="PROSITE" id="PS50862">
    <property type="entry name" value="AA_TRNA_LIGASE_II"/>
    <property type="match status" value="1"/>
</dbReference>
<sequence length="580" mass="67119">MKTNNVVYCGNVDNKLVGKEVVIKGWIKKNRKLGSLIFIDIYDITGIVQVVVEEENKFFNNCLQTPKESVVEVIGIVRKRSNVNKELKTGEFEIDLKEFKLYSKAETPPFLIQDDTDGLEDLRLKYRYLDLRRPVMQNNIINRGKIINLFRSFLVKNNFNEIETPYLSKQTPEGARDYLVPTRSKKFFALPQSPQIYKQLLMVSGMDRYFQIARCFRDEDLRADRQPEFTQIDIETSFLSDLEIQSIVQEMFIYVFKEFFNIKLKTPFTRMSYSDAIEYYGSDKPDIRFENKIMNLTNYFKDTNFKIFKSIYESKNRISAVFVEDNIVKQDIKKLEKLAQDNKAKGLAYLYIENGKMSSGSIANVIESEIIEKICKDNKLSNGTLFFVADKYEITQQALGAIRKEFVNISKKIKMNEEFAFLWVVDWPLFEYSEEEKRYVSAHHPFTMPTAETLDTFDKDPANAKAIAYDLVLNGFEIGGGSLRIYNSELQTRMFKFLGLNDSQVKEKFGFIINAFKYGVPPHGGIAFGIERILMIMLNTNSIRDVIAFPKNSSGVDLLFETPSDVSNESLKELGIKLEK</sequence>
<organism>
    <name type="scientific">Malacoplasma penetrans (strain HF-2)</name>
    <name type="common">Mycoplasma penetrans</name>
    <dbReference type="NCBI Taxonomy" id="272633"/>
    <lineage>
        <taxon>Bacteria</taxon>
        <taxon>Bacillati</taxon>
        <taxon>Mycoplasmatota</taxon>
        <taxon>Mycoplasmoidales</taxon>
        <taxon>Mycoplasmoidaceae</taxon>
        <taxon>Malacoplasma</taxon>
    </lineage>
</organism>
<keyword id="KW-0030">Aminoacyl-tRNA synthetase</keyword>
<keyword id="KW-0067">ATP-binding</keyword>
<keyword id="KW-0963">Cytoplasm</keyword>
<keyword id="KW-0436">Ligase</keyword>
<keyword id="KW-0547">Nucleotide-binding</keyword>
<keyword id="KW-0648">Protein biosynthesis</keyword>
<keyword id="KW-1185">Reference proteome</keyword>
<reference key="1">
    <citation type="journal article" date="2002" name="Nucleic Acids Res.">
        <title>The complete genomic sequence of Mycoplasma penetrans, an intracellular bacterial pathogen in humans.</title>
        <authorList>
            <person name="Sasaki Y."/>
            <person name="Ishikawa J."/>
            <person name="Yamashita A."/>
            <person name="Oshima K."/>
            <person name="Kenri T."/>
            <person name="Furuya K."/>
            <person name="Yoshino C."/>
            <person name="Horino A."/>
            <person name="Shiba T."/>
            <person name="Sasaki T."/>
            <person name="Hattori M."/>
        </authorList>
    </citation>
    <scope>NUCLEOTIDE SEQUENCE [LARGE SCALE GENOMIC DNA]</scope>
    <source>
        <strain>HF-2</strain>
    </source>
</reference>
<protein>
    <recommendedName>
        <fullName evidence="1">Aspartate--tRNA ligase</fullName>
        <ecNumber evidence="1">6.1.1.12</ecNumber>
    </recommendedName>
    <alternativeName>
        <fullName evidence="1">Aspartyl-tRNA synthetase</fullName>
        <shortName evidence="1">AspRS</shortName>
    </alternativeName>
</protein>
<name>SYD_MALP2</name>